<dbReference type="EC" id="2.1.1.297" evidence="1"/>
<dbReference type="EMBL" id="BA000022">
    <property type="protein sequence ID" value="BAA18074.1"/>
    <property type="molecule type" value="Genomic_DNA"/>
</dbReference>
<dbReference type="PIR" id="S75513">
    <property type="entry name" value="S75513"/>
</dbReference>
<dbReference type="SMR" id="P74003"/>
<dbReference type="FunCoup" id="P74003">
    <property type="interactions" value="480"/>
</dbReference>
<dbReference type="IntAct" id="P74003">
    <property type="interactions" value="5"/>
</dbReference>
<dbReference type="STRING" id="1148.gene:10498945"/>
<dbReference type="PaxDb" id="1148-1653158"/>
<dbReference type="EnsemblBacteria" id="BAA18074">
    <property type="protein sequence ID" value="BAA18074"/>
    <property type="gene ID" value="BAA18074"/>
</dbReference>
<dbReference type="KEGG" id="syn:sll1237"/>
<dbReference type="eggNOG" id="COG2890">
    <property type="taxonomic scope" value="Bacteria"/>
</dbReference>
<dbReference type="InParanoid" id="P74003"/>
<dbReference type="PhylomeDB" id="P74003"/>
<dbReference type="Proteomes" id="UP000001425">
    <property type="component" value="Chromosome"/>
</dbReference>
<dbReference type="GO" id="GO:0003676">
    <property type="term" value="F:nucleic acid binding"/>
    <property type="evidence" value="ECO:0007669"/>
    <property type="project" value="InterPro"/>
</dbReference>
<dbReference type="GO" id="GO:0102559">
    <property type="term" value="F:protein-(glutamine-N5) methyltransferase activity"/>
    <property type="evidence" value="ECO:0007669"/>
    <property type="project" value="UniProtKB-EC"/>
</dbReference>
<dbReference type="GO" id="GO:0036009">
    <property type="term" value="F:protein-glutamine N-methyltransferase activity"/>
    <property type="evidence" value="ECO:0007669"/>
    <property type="project" value="UniProtKB-UniRule"/>
</dbReference>
<dbReference type="GO" id="GO:0032259">
    <property type="term" value="P:methylation"/>
    <property type="evidence" value="ECO:0007669"/>
    <property type="project" value="UniProtKB-KW"/>
</dbReference>
<dbReference type="CDD" id="cd02440">
    <property type="entry name" value="AdoMet_MTases"/>
    <property type="match status" value="1"/>
</dbReference>
<dbReference type="Gene3D" id="3.40.50.150">
    <property type="entry name" value="Vaccinia Virus protein VP39"/>
    <property type="match status" value="1"/>
</dbReference>
<dbReference type="HAMAP" id="MF_02126">
    <property type="entry name" value="RF_methyltr_PrmC"/>
    <property type="match status" value="1"/>
</dbReference>
<dbReference type="InterPro" id="IPR002052">
    <property type="entry name" value="DNA_methylase_N6_adenine_CS"/>
</dbReference>
<dbReference type="InterPro" id="IPR004556">
    <property type="entry name" value="HemK-like"/>
</dbReference>
<dbReference type="InterPro" id="IPR052663">
    <property type="entry name" value="RF_glutamine_MTase_cyano"/>
</dbReference>
<dbReference type="InterPro" id="IPR019874">
    <property type="entry name" value="RF_methyltr_PrmC"/>
</dbReference>
<dbReference type="InterPro" id="IPR029063">
    <property type="entry name" value="SAM-dependent_MTases_sf"/>
</dbReference>
<dbReference type="InterPro" id="IPR007848">
    <property type="entry name" value="Small_mtfrase_dom"/>
</dbReference>
<dbReference type="NCBIfam" id="TIGR00536">
    <property type="entry name" value="hemK_fam"/>
    <property type="match status" value="1"/>
</dbReference>
<dbReference type="NCBIfam" id="TIGR03534">
    <property type="entry name" value="RF_mod_PrmC"/>
    <property type="match status" value="1"/>
</dbReference>
<dbReference type="PANTHER" id="PTHR47441">
    <property type="match status" value="1"/>
</dbReference>
<dbReference type="PANTHER" id="PTHR47441:SF3">
    <property type="entry name" value="RELEASE FACTOR GLUTAMINE METHYLTRANSFERASE"/>
    <property type="match status" value="1"/>
</dbReference>
<dbReference type="Pfam" id="PF05175">
    <property type="entry name" value="MTS"/>
    <property type="match status" value="1"/>
</dbReference>
<dbReference type="SUPFAM" id="SSF53335">
    <property type="entry name" value="S-adenosyl-L-methionine-dependent methyltransferases"/>
    <property type="match status" value="1"/>
</dbReference>
<organism>
    <name type="scientific">Synechocystis sp. (strain ATCC 27184 / PCC 6803 / Kazusa)</name>
    <dbReference type="NCBI Taxonomy" id="1111708"/>
    <lineage>
        <taxon>Bacteria</taxon>
        <taxon>Bacillati</taxon>
        <taxon>Cyanobacteriota</taxon>
        <taxon>Cyanophyceae</taxon>
        <taxon>Synechococcales</taxon>
        <taxon>Merismopediaceae</taxon>
        <taxon>Synechocystis</taxon>
    </lineage>
</organism>
<evidence type="ECO:0000255" key="1">
    <source>
        <dbReference type="HAMAP-Rule" id="MF_02126"/>
    </source>
</evidence>
<gene>
    <name evidence="1" type="primary">prmC</name>
    <name type="ordered locus">sll1237</name>
</gene>
<name>PRMC_SYNY3</name>
<sequence>MNKGFVSGEEFARWYATARQMAIAHGIETGELNWLLQGWTDLDRLTLRLQDFAHREIALQETWENIQRGWRRRVEEKYPVQYLLGQTQWRDFVIKVTDDVLIPRPETELIIDIVQHEHSALSPSNCADHWVDLGTGSGAIALGLAATFPQALVHAVDCSGSALAIARENAQLNQFGDRIQFHQGYWWEPLEHLKGQVQGMVSNPPYIPQRELAQLQPEVIKHEPLLALDGGPDGLQAVEQLIRRSPTYLKPGGFWLVEIMTGQAPMVAELLRASGAYQDIQIHRDLASIERFVSARTLS</sequence>
<keyword id="KW-0489">Methyltransferase</keyword>
<keyword id="KW-1185">Reference proteome</keyword>
<keyword id="KW-0949">S-adenosyl-L-methionine</keyword>
<keyword id="KW-0808">Transferase</keyword>
<feature type="chain" id="PRO_0000157169" description="Release factor glutamine methyltransferase">
    <location>
        <begin position="1"/>
        <end position="299"/>
    </location>
</feature>
<feature type="binding site" evidence="1">
    <location>
        <begin position="134"/>
        <end position="138"/>
    </location>
    <ligand>
        <name>S-adenosyl-L-methionine</name>
        <dbReference type="ChEBI" id="CHEBI:59789"/>
    </ligand>
</feature>
<feature type="binding site" evidence="1">
    <location>
        <position position="157"/>
    </location>
    <ligand>
        <name>S-adenosyl-L-methionine</name>
        <dbReference type="ChEBI" id="CHEBI:59789"/>
    </ligand>
</feature>
<feature type="binding site" evidence="1">
    <location>
        <position position="186"/>
    </location>
    <ligand>
        <name>S-adenosyl-L-methionine</name>
        <dbReference type="ChEBI" id="CHEBI:59789"/>
    </ligand>
</feature>
<feature type="binding site" evidence="1">
    <location>
        <begin position="203"/>
        <end position="206"/>
    </location>
    <ligand>
        <name>substrate</name>
    </ligand>
</feature>
<feature type="binding site" evidence="1">
    <location>
        <position position="203"/>
    </location>
    <ligand>
        <name>S-adenosyl-L-methionine</name>
        <dbReference type="ChEBI" id="CHEBI:59789"/>
    </ligand>
</feature>
<reference key="1">
    <citation type="journal article" date="1996" name="DNA Res.">
        <title>Sequence analysis of the genome of the unicellular cyanobacterium Synechocystis sp. strain PCC6803. II. Sequence determination of the entire genome and assignment of potential protein-coding regions.</title>
        <authorList>
            <person name="Kaneko T."/>
            <person name="Sato S."/>
            <person name="Kotani H."/>
            <person name="Tanaka A."/>
            <person name="Asamizu E."/>
            <person name="Nakamura Y."/>
            <person name="Miyajima N."/>
            <person name="Hirosawa M."/>
            <person name="Sugiura M."/>
            <person name="Sasamoto S."/>
            <person name="Kimura T."/>
            <person name="Hosouchi T."/>
            <person name="Matsuno A."/>
            <person name="Muraki A."/>
            <person name="Nakazaki N."/>
            <person name="Naruo K."/>
            <person name="Okumura S."/>
            <person name="Shimpo S."/>
            <person name="Takeuchi C."/>
            <person name="Wada T."/>
            <person name="Watanabe A."/>
            <person name="Yamada M."/>
            <person name="Yasuda M."/>
            <person name="Tabata S."/>
        </authorList>
    </citation>
    <scope>NUCLEOTIDE SEQUENCE [LARGE SCALE GENOMIC DNA]</scope>
    <source>
        <strain>ATCC 27184 / PCC 6803 / Kazusa</strain>
    </source>
</reference>
<comment type="function">
    <text evidence="1">Methylates the class 1 translation termination release factors RF1/PrfA and RF2/PrfB on the glutamine residue of the universally conserved GGQ motif.</text>
</comment>
<comment type="catalytic activity">
    <reaction evidence="1">
        <text>L-glutaminyl-[peptide chain release factor] + S-adenosyl-L-methionine = N(5)-methyl-L-glutaminyl-[peptide chain release factor] + S-adenosyl-L-homocysteine + H(+)</text>
        <dbReference type="Rhea" id="RHEA:42896"/>
        <dbReference type="Rhea" id="RHEA-COMP:10271"/>
        <dbReference type="Rhea" id="RHEA-COMP:10272"/>
        <dbReference type="ChEBI" id="CHEBI:15378"/>
        <dbReference type="ChEBI" id="CHEBI:30011"/>
        <dbReference type="ChEBI" id="CHEBI:57856"/>
        <dbReference type="ChEBI" id="CHEBI:59789"/>
        <dbReference type="ChEBI" id="CHEBI:61891"/>
        <dbReference type="EC" id="2.1.1.297"/>
    </reaction>
</comment>
<comment type="similarity">
    <text evidence="1">Belongs to the protein N5-glutamine methyltransferase family. PrmC subfamily.</text>
</comment>
<protein>
    <recommendedName>
        <fullName evidence="1">Release factor glutamine methyltransferase</fullName>
        <shortName evidence="1">RF MTase</shortName>
        <ecNumber evidence="1">2.1.1.297</ecNumber>
    </recommendedName>
    <alternativeName>
        <fullName>M.Ssp6803HemKP</fullName>
    </alternativeName>
    <alternativeName>
        <fullName evidence="1">N5-glutamine methyltransferase PrmC</fullName>
    </alternativeName>
    <alternativeName>
        <fullName evidence="1">Protein-(glutamine-N5) MTase PrmC</fullName>
    </alternativeName>
    <alternativeName>
        <fullName evidence="1">Protein-glutamine N-methyltransferase PrmC</fullName>
    </alternativeName>
</protein>
<proteinExistence type="inferred from homology"/>
<accession>P74003</accession>